<organism>
    <name type="scientific">Aspergillus terreus (strain NIH 2624 / FGSC A1156)</name>
    <dbReference type="NCBI Taxonomy" id="341663"/>
    <lineage>
        <taxon>Eukaryota</taxon>
        <taxon>Fungi</taxon>
        <taxon>Dikarya</taxon>
        <taxon>Ascomycota</taxon>
        <taxon>Pezizomycotina</taxon>
        <taxon>Eurotiomycetes</taxon>
        <taxon>Eurotiomycetidae</taxon>
        <taxon>Eurotiales</taxon>
        <taxon>Aspergillaceae</taxon>
        <taxon>Aspergillus</taxon>
        <taxon>Aspergillus subgen. Circumdati</taxon>
    </lineage>
</organism>
<protein>
    <recommendedName>
        <fullName evidence="7">Terpene cyclase trt1</fullName>
        <ecNumber evidence="3">4.2.3.-</ecNumber>
    </recommendedName>
    <alternativeName>
        <fullName evidence="7">Terretonin synthesis protein 1</fullName>
    </alternativeName>
</protein>
<gene>
    <name evidence="7" type="primary">trt1</name>
    <name type="ORF">ATEG_10077</name>
</gene>
<feature type="chain" id="PRO_0000436590" description="Terpene cyclase trt1">
    <location>
        <begin position="1"/>
        <end position="204"/>
    </location>
</feature>
<feature type="transmembrane region" description="Helical" evidence="1">
    <location>
        <begin position="44"/>
        <end position="64"/>
    </location>
</feature>
<feature type="transmembrane region" description="Helical" evidence="1">
    <location>
        <begin position="67"/>
        <end position="87"/>
    </location>
</feature>
<feature type="transmembrane region" description="Helical" evidence="1">
    <location>
        <begin position="103"/>
        <end position="122"/>
    </location>
</feature>
<feature type="transmembrane region" description="Helical" evidence="1">
    <location>
        <begin position="132"/>
        <end position="154"/>
    </location>
</feature>
<feature type="transmembrane region" description="Helical" evidence="1">
    <location>
        <begin position="169"/>
        <end position="189"/>
    </location>
</feature>
<proteinExistence type="evidence at protein level"/>
<name>TRT1_ASPTN</name>
<reference key="1">
    <citation type="submission" date="2005-09" db="EMBL/GenBank/DDBJ databases">
        <title>Annotation of the Aspergillus terreus NIH2624 genome.</title>
        <authorList>
            <person name="Birren B.W."/>
            <person name="Lander E.S."/>
            <person name="Galagan J.E."/>
            <person name="Nusbaum C."/>
            <person name="Devon K."/>
            <person name="Henn M."/>
            <person name="Ma L.-J."/>
            <person name="Jaffe D.B."/>
            <person name="Butler J."/>
            <person name="Alvarez P."/>
            <person name="Gnerre S."/>
            <person name="Grabherr M."/>
            <person name="Kleber M."/>
            <person name="Mauceli E.W."/>
            <person name="Brockman W."/>
            <person name="Rounsley S."/>
            <person name="Young S.K."/>
            <person name="LaButti K."/>
            <person name="Pushparaj V."/>
            <person name="DeCaprio D."/>
            <person name="Crawford M."/>
            <person name="Koehrsen M."/>
            <person name="Engels R."/>
            <person name="Montgomery P."/>
            <person name="Pearson M."/>
            <person name="Howarth C."/>
            <person name="Larson L."/>
            <person name="Luoma S."/>
            <person name="White J."/>
            <person name="Alvarado L."/>
            <person name="Kodira C.D."/>
            <person name="Zeng Q."/>
            <person name="Oleary S."/>
            <person name="Yandava C."/>
            <person name="Denning D.W."/>
            <person name="Nierman W.C."/>
            <person name="Milne T."/>
            <person name="Madden K."/>
        </authorList>
    </citation>
    <scope>NUCLEOTIDE SEQUENCE [LARGE SCALE GENOMIC DNA]</scope>
    <source>
        <strain>NIH 2624 / FGSC A1156</strain>
    </source>
</reference>
<reference key="2">
    <citation type="journal article" date="2012" name="ChemBioChem">
        <title>Identification of a key prenyltransferase involved in biosynthesis of the most abundant fungal meroterpenoids derived from 3,5-dimethylorsellinic acid.</title>
        <authorList>
            <person name="Itoh T."/>
            <person name="Tokunaga K."/>
            <person name="Radhakrishnan E.K."/>
            <person name="Fujii I."/>
            <person name="Abe I."/>
            <person name="Ebizuka Y."/>
            <person name="Kushiro T."/>
        </authorList>
    </citation>
    <scope>FUNCTION</scope>
</reference>
<reference key="3">
    <citation type="journal article" date="2012" name="ChemBioChem">
        <title>Terretonin biosynthesis requires methylation as essential step for cyclization.</title>
        <authorList>
            <person name="Matsuda Y."/>
            <person name="Awakawa T."/>
            <person name="Itoh T."/>
            <person name="Wakimoto T."/>
            <person name="Kushiro T."/>
            <person name="Fujii I."/>
            <person name="Ebizuka Y."/>
            <person name="Abe I."/>
        </authorList>
    </citation>
    <scope>FUNCTION</scope>
    <scope>CATALYTIC ACTIVITY</scope>
</reference>
<reference key="4">
    <citation type="journal article" date="2012" name="Org. Lett.">
        <title>Molecular genetic characterization of a cluster in A. terreus for biosynthesis of the meroterpenoid terretonin.</title>
        <authorList>
            <person name="Guo C.J."/>
            <person name="Knox B.P."/>
            <person name="Chiang Y.M."/>
            <person name="Lo H.C."/>
            <person name="Sanchez J.F."/>
            <person name="Lee K.H."/>
            <person name="Oakley B.R."/>
            <person name="Bruno K.S."/>
            <person name="Wang C.C."/>
        </authorList>
    </citation>
    <scope>FUNCTION</scope>
    <scope>DISRUPTION PHENOTYPE</scope>
</reference>
<reference key="5">
    <citation type="journal article" date="2015" name="J. Am. Chem. Soc.">
        <title>Uncovering the unusual D-ring construction in terretonin biosynthesis by collaboration of a multifunctional cytochrome P450 and a unique isomerase.</title>
        <authorList>
            <person name="Matsuda Y."/>
            <person name="Iwabuchi T."/>
            <person name="Wakimoto T."/>
            <person name="Awakawa T."/>
            <person name="Abe I."/>
        </authorList>
    </citation>
    <scope>FUNCTION</scope>
</reference>
<reference key="6">
    <citation type="journal article" date="2017" name="Nat. Chem. Biol.">
        <title>Molecular basis for the unusual ring reconstruction in fungal meroterpenoid biogenesis.</title>
        <authorList>
            <person name="Mori T."/>
            <person name="Iwabuchi T."/>
            <person name="Hoshino S."/>
            <person name="Wang H."/>
            <person name="Matsuda Y."/>
            <person name="Abe I."/>
        </authorList>
    </citation>
    <scope>FUNCTION</scope>
</reference>
<comment type="function">
    <text evidence="2 3 4 5 6">Terpene cyclase; part of the gene cluster that mediates the biosynthesis of terretonin, a fungal meroterpenoid that acts as a mycotoxin (PubMed:22549923, PubMed:23116177, PubMed:25671343). The first step of the pathway is the synthesis of 3,5-dimethylorsellinic acid (DMOA) by the polyketide synthase trt4 (PubMed:22549923, PubMed:23116177). DMOA is then prenylated into farnesyl-DMOA by the polyprenyl transferase trt2 (PubMed:22549923, PubMed:22782788, PubMed:23116177). Methylation by the methyltransferase trt5 then leads to farnesyl-DMOA methyl ester which is further subject to epoxidation by the FAD-dependent monooxygenase trt8 to yield epoxyfarnesyl-DMOA methyl ester (PubMed:22549923, PubMed:22782788, PubMed:23116177). Cyclization of epoxyfarnesyl-DMOA methyl ester by the terpene cyclase trt1 leads to a tetracycle intermediate which is in turn converted to preterretonin (PubMed:22549923, PubMed:22782788, PubMed:23116177). Dehydrogenase trt9 comes next to transform preterretonin to preterrenoid (PubMed:22549923, PubMed:23116177). The FAD-dependent monooxygenase trt3 is then required for the C-hydroxylation at C16 of preterrenoid to yield terrenoid (PubMed:22549923, PubMed:23116177). The cytochrome P450 trt6 catalyzes three successive oxidations to transform terrenoid into an unstable intermediate, which then undergoes the D-ring expansion and unusual rearrangement of the methoxy group to afford the core skeleton of terretonin (PubMed:25671343, PubMed:28759016). Trt14 catalyzes the D-ring expansion of terretonin involving intramolecular methoxy rearrangement as well as the hydrolysis of the expanded D-ring and the methyl ester moiety (PubMed:25671343, PubMed:28759016). Finally, the nonheme iron-dependent dioxygenase trt7 accomplishes the last two oxidation reactions steps to complete the biosynthesis of terretonin (PubMed:25671343). Terretonin C is produced via spontaneous decarboxylation of the terretonin precursor (PubMed:23116177). Another shunt product of the terretonin biosynthesis is dihydrofarnesyl-DMOA, derived from epoxyfarnesyl-DMOA through hydrolysis of the epoxide (PubMed:22549923, PubMed:22782788, PubMed:23116177).</text>
</comment>
<comment type="pathway">
    <text evidence="4">Secondary metabolite biosynthesis; terpenoid biosynthesis.</text>
</comment>
<comment type="subcellular location">
    <subcellularLocation>
        <location evidence="1">Membrane</location>
        <topology evidence="1">Multi-pass membrane protein</topology>
    </subcellularLocation>
</comment>
<comment type="disruption phenotype">
    <text evidence="4">Impairs the synthesis of terretonin but accumulates dimethylorsellinate through the decomposition of an unstable intermediate (PubMed:23116177).</text>
</comment>
<comment type="similarity">
    <text evidence="8">Belongs to the paxB family.</text>
</comment>
<sequence>MPSIISDPQAYDIMLRLLQFSCWSLSYINTVRTTLSDQLPSVSFMSICCDVAWEFVYAFVYPIASSHWAGGIRIWFAMHCVMLFIVAKYAPNDWDHVPLMKRFARLAYVAITIGFMAGHLALASEIGPALGFFWSGALCQITASLGSLCLLVCRGSTRGASIKTCPLCWFYIAITLTLDAIYPVFFFYFRAIEHPKKDSERKVE</sequence>
<evidence type="ECO:0000255" key="1"/>
<evidence type="ECO:0000269" key="2">
    <source>
    </source>
</evidence>
<evidence type="ECO:0000269" key="3">
    <source>
    </source>
</evidence>
<evidence type="ECO:0000269" key="4">
    <source>
    </source>
</evidence>
<evidence type="ECO:0000269" key="5">
    <source>
    </source>
</evidence>
<evidence type="ECO:0000269" key="6">
    <source>
    </source>
</evidence>
<evidence type="ECO:0000303" key="7">
    <source>
    </source>
</evidence>
<evidence type="ECO:0000305" key="8"/>
<keyword id="KW-0456">Lyase</keyword>
<keyword id="KW-0472">Membrane</keyword>
<keyword id="KW-1185">Reference proteome</keyword>
<keyword id="KW-0812">Transmembrane</keyword>
<keyword id="KW-1133">Transmembrane helix</keyword>
<accession>Q0C8A7</accession>
<dbReference type="EC" id="4.2.3.-" evidence="3"/>
<dbReference type="EMBL" id="CH476609">
    <property type="protein sequence ID" value="EAU29526.1"/>
    <property type="molecule type" value="Genomic_DNA"/>
</dbReference>
<dbReference type="RefSeq" id="XP_001209379.1">
    <property type="nucleotide sequence ID" value="XM_001209379.1"/>
</dbReference>
<dbReference type="STRING" id="341663.Q0C8A7"/>
<dbReference type="EnsemblFungi" id="EAU29526">
    <property type="protein sequence ID" value="EAU29526"/>
    <property type="gene ID" value="ATEG_10077"/>
</dbReference>
<dbReference type="GeneID" id="4319420"/>
<dbReference type="VEuPathDB" id="FungiDB:ATEG_10077"/>
<dbReference type="HOGENOM" id="CLU_087059_3_0_1"/>
<dbReference type="OMA" id="CNDIGWE"/>
<dbReference type="OrthoDB" id="5294024at2759"/>
<dbReference type="UniPathway" id="UPA00213"/>
<dbReference type="Proteomes" id="UP000007963">
    <property type="component" value="Unassembled WGS sequence"/>
</dbReference>
<dbReference type="GO" id="GO:0016020">
    <property type="term" value="C:membrane"/>
    <property type="evidence" value="ECO:0007669"/>
    <property type="project" value="UniProtKB-SubCell"/>
</dbReference>
<dbReference type="GO" id="GO:0016829">
    <property type="term" value="F:lyase activity"/>
    <property type="evidence" value="ECO:0007669"/>
    <property type="project" value="UniProtKB-KW"/>
</dbReference>
<dbReference type="GO" id="GO:0016114">
    <property type="term" value="P:terpenoid biosynthetic process"/>
    <property type="evidence" value="ECO:0007669"/>
    <property type="project" value="UniProtKB-UniPathway"/>
</dbReference>
<dbReference type="InterPro" id="IPR039020">
    <property type="entry name" value="PaxB-like"/>
</dbReference>
<dbReference type="PANTHER" id="PTHR42038">
    <property type="match status" value="1"/>
</dbReference>
<dbReference type="PANTHER" id="PTHR42038:SF2">
    <property type="entry name" value="TERPENE CYCLASE AUSL"/>
    <property type="match status" value="1"/>
</dbReference>
<dbReference type="Pfam" id="PF25129">
    <property type="entry name" value="Pyr4-TMTC"/>
    <property type="match status" value="1"/>
</dbReference>